<accession>P01851</accession>
<name>TCB2_MOUSE</name>
<sequence>EDLRNVTPPKVSLFEPSKAEIANKQKATLVCLARGFFPDHVELSWWVNGKEVHSGVSTDPQAYKESNYSYCLSSRLRVSATFWHNPRNHFRCQVQFHGLSEEDKWPEGSPKPVTQNISAEAWGRADCGITSASYHQGVLSATILYEILLGKATLYAVLVSGLVLMAMVKKKNS</sequence>
<reference key="1">
    <citation type="journal article" date="1984" name="Nature">
        <title>Genomic organization and sequence of T-cell receptor beta-chain constant- and joining-region genes.</title>
        <authorList>
            <person name="Gascoigne N.R.J."/>
            <person name="Chien Y."/>
            <person name="Becker D.M."/>
            <person name="Kavaler J."/>
            <person name="Davis M.M."/>
        </authorList>
    </citation>
    <scope>NUCLEOTIDE SEQUENCE [GENOMIC DNA]</scope>
    <source>
        <strain>B10.A</strain>
    </source>
</reference>
<reference key="2">
    <citation type="journal article" date="1984" name="Nature">
        <title>Complete primary structure of a heterodimeric T-cell receptor deduced from cDNA sequences.</title>
        <authorList>
            <person name="Saito H."/>
            <person name="Kranz D.M."/>
            <person name="Takagaki Y."/>
            <person name="Hayday A.C."/>
            <person name="Eisen H.N."/>
            <person name="Tonegawa S."/>
        </authorList>
    </citation>
    <scope>NUCLEOTIDE SEQUENCE (CLONE 2C)</scope>
    <source>
        <strain>BALB.B</strain>
    </source>
</reference>
<reference key="3">
    <citation type="journal article" date="2002" name="Structure">
        <title>Structures of two streptococcal superantigens bound to TCR beta chains reveal diversity in the architecture of T cell signaling complexes.</title>
        <authorList>
            <person name="Sundberg E.J."/>
            <person name="Li H."/>
            <person name="Llera A.S."/>
            <person name="McCormick J.K."/>
            <person name="Tormo J."/>
            <person name="Schlievert P.M."/>
            <person name="Karjalainen K."/>
            <person name="Mariuzza R.A."/>
        </authorList>
    </citation>
    <scope>X-RAY CRYSTALLOGRAPHY (2.5 ANGSTROMS) OF 1-124</scope>
</reference>
<dbReference type="PDB" id="1L0X">
    <property type="method" value="X-ray"/>
    <property type="resolution" value="2.80 A"/>
    <property type="chains" value="A/C=1-126"/>
</dbReference>
<dbReference type="PDB" id="1L0Y">
    <property type="method" value="X-ray"/>
    <property type="resolution" value="2.50 A"/>
    <property type="chains" value="A/C=1-124"/>
</dbReference>
<dbReference type="PDB" id="1MWA">
    <property type="method" value="X-ray"/>
    <property type="resolution" value="2.40 A"/>
    <property type="chains" value="B/D=1-127"/>
</dbReference>
<dbReference type="PDB" id="2Q86">
    <property type="method" value="X-ray"/>
    <property type="resolution" value="1.85 A"/>
    <property type="chains" value="B/D=1-141"/>
</dbReference>
<dbReference type="PDB" id="5M01">
    <property type="method" value="X-ray"/>
    <property type="resolution" value="1.95 A"/>
    <property type="chains" value="H=1-127"/>
</dbReference>
<dbReference type="PDB" id="5M02">
    <property type="method" value="X-ray"/>
    <property type="resolution" value="1.75 A"/>
    <property type="chains" value="H=1-127"/>
</dbReference>
<dbReference type="PDBsum" id="1L0X"/>
<dbReference type="PDBsum" id="1L0Y"/>
<dbReference type="PDBsum" id="1MWA"/>
<dbReference type="PDBsum" id="2Q86"/>
<dbReference type="PDBsum" id="5M01"/>
<dbReference type="PDBsum" id="5M02"/>
<dbReference type="SMR" id="P01851"/>
<dbReference type="FunCoup" id="P01851">
    <property type="interactions" value="120"/>
</dbReference>
<dbReference type="IntAct" id="P01851">
    <property type="interactions" value="1"/>
</dbReference>
<dbReference type="MINT" id="P01851"/>
<dbReference type="GlyGen" id="P01851">
    <property type="glycosylation" value="2 sites"/>
</dbReference>
<dbReference type="PhosphoSitePlus" id="P01851"/>
<dbReference type="InParanoid" id="P01851"/>
<dbReference type="EvolutionaryTrace" id="P01851"/>
<dbReference type="Proteomes" id="UP000000589">
    <property type="component" value="Unplaced"/>
</dbReference>
<dbReference type="RNAct" id="P01851">
    <property type="molecule type" value="protein"/>
</dbReference>
<dbReference type="GO" id="GO:0042105">
    <property type="term" value="C:alpha-beta T cell receptor complex"/>
    <property type="evidence" value="ECO:0000318"/>
    <property type="project" value="GO_Central"/>
</dbReference>
<dbReference type="CDD" id="cd05769">
    <property type="entry name" value="IgC1_TCR_beta"/>
    <property type="match status" value="1"/>
</dbReference>
<dbReference type="FunFam" id="2.60.40.10:FF:001090">
    <property type="entry name" value="T cell receptor beta constant 1"/>
    <property type="match status" value="1"/>
</dbReference>
<dbReference type="Gene3D" id="2.60.40.10">
    <property type="entry name" value="Immunoglobulins"/>
    <property type="match status" value="1"/>
</dbReference>
<dbReference type="InterPro" id="IPR007110">
    <property type="entry name" value="Ig-like_dom"/>
</dbReference>
<dbReference type="InterPro" id="IPR036179">
    <property type="entry name" value="Ig-like_dom_sf"/>
</dbReference>
<dbReference type="InterPro" id="IPR013783">
    <property type="entry name" value="Ig-like_fold"/>
</dbReference>
<dbReference type="InterPro" id="IPR003597">
    <property type="entry name" value="Ig_C1-set"/>
</dbReference>
<dbReference type="InterPro" id="IPR050380">
    <property type="entry name" value="Immune_Resp_Modulators"/>
</dbReference>
<dbReference type="PANTHER" id="PTHR23411">
    <property type="entry name" value="TAPASIN"/>
    <property type="match status" value="1"/>
</dbReference>
<dbReference type="Pfam" id="PF07654">
    <property type="entry name" value="C1-set"/>
    <property type="match status" value="1"/>
</dbReference>
<dbReference type="SMART" id="SM00407">
    <property type="entry name" value="IGc1"/>
    <property type="match status" value="1"/>
</dbReference>
<dbReference type="SUPFAM" id="SSF48726">
    <property type="entry name" value="Immunoglobulin"/>
    <property type="match status" value="1"/>
</dbReference>
<dbReference type="PROSITE" id="PS50835">
    <property type="entry name" value="IG_LIKE"/>
    <property type="match status" value="1"/>
</dbReference>
<keyword id="KW-0002">3D-structure</keyword>
<keyword id="KW-0325">Glycoprotein</keyword>
<keyword id="KW-0393">Immunoglobulin domain</keyword>
<keyword id="KW-0472">Membrane</keyword>
<keyword id="KW-0675">Receptor</keyword>
<keyword id="KW-1185">Reference proteome</keyword>
<keyword id="KW-0812">Transmembrane</keyword>
<keyword id="KW-1133">Transmembrane helix</keyword>
<organism>
    <name type="scientific">Mus musculus</name>
    <name type="common">Mouse</name>
    <dbReference type="NCBI Taxonomy" id="10090"/>
    <lineage>
        <taxon>Eukaryota</taxon>
        <taxon>Metazoa</taxon>
        <taxon>Chordata</taxon>
        <taxon>Craniata</taxon>
        <taxon>Vertebrata</taxon>
        <taxon>Euteleostomi</taxon>
        <taxon>Mammalia</taxon>
        <taxon>Eutheria</taxon>
        <taxon>Euarchontoglires</taxon>
        <taxon>Glires</taxon>
        <taxon>Rodentia</taxon>
        <taxon>Myomorpha</taxon>
        <taxon>Muroidea</taxon>
        <taxon>Muridae</taxon>
        <taxon>Murinae</taxon>
        <taxon>Mus</taxon>
        <taxon>Mus</taxon>
    </lineage>
</organism>
<comment type="subcellular location">
    <subcellularLocation>
        <location evidence="2">Membrane</location>
        <topology evidence="2">Single-pass membrane protein</topology>
    </subcellularLocation>
</comment>
<comment type="miscellaneous">
    <text>Clone B10.A was isolated from a cytotoxic T lymphocyte.</text>
</comment>
<comment type="miscellaneous">
    <text>Clone 2C was isolated from a cytotoxic T lymphocyte.</text>
</comment>
<feature type="chain" id="PRO_0000184528" description="T-cell receptor beta-2 chain C region">
    <location>
        <begin position="1" status="less than"/>
        <end position="173"/>
    </location>
</feature>
<feature type="transmembrane region" description="Helical" evidence="1">
    <location>
        <begin position="147"/>
        <end position="168"/>
    </location>
</feature>
<feature type="topological domain" description="Cytoplasmic" evidence="1">
    <location>
        <begin position="169"/>
        <end position="173"/>
    </location>
</feature>
<feature type="region of interest" description="C region">
    <location>
        <begin position="1"/>
        <end position="146"/>
    </location>
</feature>
<feature type="glycosylation site" description="N-linked (GlcNAc...) asparagine" evidence="1">
    <location>
        <position position="67"/>
    </location>
</feature>
<feature type="glycosylation site" description="N-linked (GlcNAc...) asparagine" evidence="1">
    <location>
        <position position="116"/>
    </location>
</feature>
<feature type="sequence variant" description="In clone 2C.">
    <original>K</original>
    <variation>R</variation>
    <location>
        <position position="50"/>
    </location>
</feature>
<feature type="sequence variant" description="In clone 2C.">
    <original>Y</original>
    <variation>H</variation>
    <location>
        <position position="70"/>
    </location>
</feature>
<feature type="non-terminal residue">
    <location>
        <position position="1"/>
    </location>
</feature>
<feature type="helix" evidence="5">
    <location>
        <begin position="3"/>
        <end position="5"/>
    </location>
</feature>
<feature type="strand" evidence="5">
    <location>
        <begin position="10"/>
        <end position="15"/>
    </location>
</feature>
<feature type="helix" evidence="5">
    <location>
        <begin position="18"/>
        <end position="24"/>
    </location>
</feature>
<feature type="strand" evidence="5">
    <location>
        <begin position="25"/>
        <end position="38"/>
    </location>
</feature>
<feature type="strand" evidence="5">
    <location>
        <begin position="41"/>
        <end position="47"/>
    </location>
</feature>
<feature type="strand" evidence="5">
    <location>
        <begin position="50"/>
        <end position="52"/>
    </location>
</feature>
<feature type="strand" evidence="5">
    <location>
        <begin position="56"/>
        <end position="58"/>
    </location>
</feature>
<feature type="strand" evidence="5">
    <location>
        <begin position="63"/>
        <end position="66"/>
    </location>
</feature>
<feature type="strand" evidence="5">
    <location>
        <begin position="69"/>
        <end position="79"/>
    </location>
</feature>
<feature type="helix" evidence="5">
    <location>
        <begin position="80"/>
        <end position="83"/>
    </location>
</feature>
<feature type="strand" evidence="5">
    <location>
        <begin position="89"/>
        <end position="96"/>
    </location>
</feature>
<feature type="strand" evidence="3">
    <location>
        <begin position="101"/>
        <end position="103"/>
    </location>
</feature>
<feature type="strand" evidence="4">
    <location>
        <begin position="107"/>
        <end position="109"/>
    </location>
</feature>
<feature type="strand" evidence="5">
    <location>
        <begin position="113"/>
        <end position="122"/>
    </location>
</feature>
<evidence type="ECO:0000255" key="1"/>
<evidence type="ECO:0000305" key="2"/>
<evidence type="ECO:0007829" key="3">
    <source>
        <dbReference type="PDB" id="1L0X"/>
    </source>
</evidence>
<evidence type="ECO:0007829" key="4">
    <source>
        <dbReference type="PDB" id="2Q86"/>
    </source>
</evidence>
<evidence type="ECO:0007829" key="5">
    <source>
        <dbReference type="PDB" id="5M02"/>
    </source>
</evidence>
<protein>
    <recommendedName>
        <fullName>T-cell receptor beta-2 chain C region</fullName>
    </recommendedName>
</protein>
<proteinExistence type="evidence at protein level"/>